<protein>
    <recommendedName>
        <fullName evidence="1">Beta-ketoacyl-[acyl-carrier-protein] synthase III</fullName>
        <shortName evidence="1">Beta-ketoacyl-ACP synthase III</shortName>
        <shortName evidence="1">KAS III</shortName>
        <ecNumber evidence="1">2.3.1.180</ecNumber>
    </recommendedName>
    <alternativeName>
        <fullName evidence="1">3-oxoacyl-[acyl-carrier-protein] synthase 3</fullName>
    </alternativeName>
    <alternativeName>
        <fullName evidence="1">3-oxoacyl-[acyl-carrier-protein] synthase III</fullName>
    </alternativeName>
</protein>
<gene>
    <name evidence="1" type="primary">fabH</name>
    <name type="ordered locus">Ava_2729</name>
</gene>
<dbReference type="EC" id="2.3.1.180" evidence="1"/>
<dbReference type="EMBL" id="CP000117">
    <property type="protein sequence ID" value="ABA22342.1"/>
    <property type="molecule type" value="Genomic_DNA"/>
</dbReference>
<dbReference type="SMR" id="Q3M9J4"/>
<dbReference type="STRING" id="240292.Ava_2729"/>
<dbReference type="KEGG" id="ava:Ava_2729"/>
<dbReference type="eggNOG" id="COG0332">
    <property type="taxonomic scope" value="Bacteria"/>
</dbReference>
<dbReference type="HOGENOM" id="CLU_039592_0_1_3"/>
<dbReference type="UniPathway" id="UPA00094"/>
<dbReference type="Proteomes" id="UP000002533">
    <property type="component" value="Chromosome"/>
</dbReference>
<dbReference type="GO" id="GO:0005737">
    <property type="term" value="C:cytoplasm"/>
    <property type="evidence" value="ECO:0007669"/>
    <property type="project" value="UniProtKB-SubCell"/>
</dbReference>
<dbReference type="GO" id="GO:0004315">
    <property type="term" value="F:3-oxoacyl-[acyl-carrier-protein] synthase activity"/>
    <property type="evidence" value="ECO:0007669"/>
    <property type="project" value="InterPro"/>
</dbReference>
<dbReference type="GO" id="GO:0033818">
    <property type="term" value="F:beta-ketoacyl-acyl-carrier-protein synthase III activity"/>
    <property type="evidence" value="ECO:0007669"/>
    <property type="project" value="UniProtKB-UniRule"/>
</dbReference>
<dbReference type="GO" id="GO:0006633">
    <property type="term" value="P:fatty acid biosynthetic process"/>
    <property type="evidence" value="ECO:0007669"/>
    <property type="project" value="UniProtKB-UniRule"/>
</dbReference>
<dbReference type="CDD" id="cd00830">
    <property type="entry name" value="KAS_III"/>
    <property type="match status" value="1"/>
</dbReference>
<dbReference type="FunFam" id="3.40.47.10:FF:000004">
    <property type="entry name" value="3-oxoacyl-[acyl-carrier-protein] synthase 3"/>
    <property type="match status" value="1"/>
</dbReference>
<dbReference type="Gene3D" id="3.40.47.10">
    <property type="match status" value="1"/>
</dbReference>
<dbReference type="HAMAP" id="MF_01815">
    <property type="entry name" value="FabH"/>
    <property type="match status" value="1"/>
</dbReference>
<dbReference type="InterPro" id="IPR013747">
    <property type="entry name" value="ACP_syn_III_C"/>
</dbReference>
<dbReference type="InterPro" id="IPR013751">
    <property type="entry name" value="ACP_syn_III_N"/>
</dbReference>
<dbReference type="InterPro" id="IPR004655">
    <property type="entry name" value="FabH"/>
</dbReference>
<dbReference type="InterPro" id="IPR016039">
    <property type="entry name" value="Thiolase-like"/>
</dbReference>
<dbReference type="NCBIfam" id="TIGR00747">
    <property type="entry name" value="fabH"/>
    <property type="match status" value="1"/>
</dbReference>
<dbReference type="NCBIfam" id="NF006829">
    <property type="entry name" value="PRK09352.1"/>
    <property type="match status" value="1"/>
</dbReference>
<dbReference type="PANTHER" id="PTHR43091">
    <property type="entry name" value="3-OXOACYL-[ACYL-CARRIER-PROTEIN] SYNTHASE"/>
    <property type="match status" value="1"/>
</dbReference>
<dbReference type="PANTHER" id="PTHR43091:SF1">
    <property type="entry name" value="BETA-KETOACYL-[ACYL-CARRIER-PROTEIN] SYNTHASE III, CHLOROPLASTIC"/>
    <property type="match status" value="1"/>
</dbReference>
<dbReference type="Pfam" id="PF08545">
    <property type="entry name" value="ACP_syn_III"/>
    <property type="match status" value="1"/>
</dbReference>
<dbReference type="Pfam" id="PF08541">
    <property type="entry name" value="ACP_syn_III_C"/>
    <property type="match status" value="1"/>
</dbReference>
<dbReference type="SUPFAM" id="SSF53901">
    <property type="entry name" value="Thiolase-like"/>
    <property type="match status" value="1"/>
</dbReference>
<feature type="chain" id="PRO_1000056323" description="Beta-ketoacyl-[acyl-carrier-protein] synthase III">
    <location>
        <begin position="1"/>
        <end position="330"/>
    </location>
</feature>
<feature type="region of interest" description="ACP-binding" evidence="1">
    <location>
        <begin position="256"/>
        <end position="260"/>
    </location>
</feature>
<feature type="active site" evidence="1">
    <location>
        <position position="114"/>
    </location>
</feature>
<feature type="active site" evidence="1">
    <location>
        <position position="255"/>
    </location>
</feature>
<feature type="active site" evidence="1">
    <location>
        <position position="285"/>
    </location>
</feature>
<accession>Q3M9J4</accession>
<reference key="1">
    <citation type="journal article" date="2014" name="Stand. Genomic Sci.">
        <title>Complete genome sequence of Anabaena variabilis ATCC 29413.</title>
        <authorList>
            <person name="Thiel T."/>
            <person name="Pratte B.S."/>
            <person name="Zhong J."/>
            <person name="Goodwin L."/>
            <person name="Copeland A."/>
            <person name="Lucas S."/>
            <person name="Han C."/>
            <person name="Pitluck S."/>
            <person name="Land M.L."/>
            <person name="Kyrpides N.C."/>
            <person name="Woyke T."/>
        </authorList>
    </citation>
    <scope>NUCLEOTIDE SEQUENCE [LARGE SCALE GENOMIC DNA]</scope>
    <source>
        <strain>ATCC 29413 / PCC 7937</strain>
    </source>
</reference>
<proteinExistence type="inferred from homology"/>
<organism>
    <name type="scientific">Trichormus variabilis (strain ATCC 29413 / PCC 7937)</name>
    <name type="common">Anabaena variabilis</name>
    <dbReference type="NCBI Taxonomy" id="240292"/>
    <lineage>
        <taxon>Bacteria</taxon>
        <taxon>Bacillati</taxon>
        <taxon>Cyanobacteriota</taxon>
        <taxon>Cyanophyceae</taxon>
        <taxon>Nostocales</taxon>
        <taxon>Nostocaceae</taxon>
        <taxon>Trichormus</taxon>
    </lineage>
</organism>
<name>FABH_TRIV2</name>
<evidence type="ECO:0000255" key="1">
    <source>
        <dbReference type="HAMAP-Rule" id="MF_01815"/>
    </source>
</evidence>
<keyword id="KW-0012">Acyltransferase</keyword>
<keyword id="KW-0963">Cytoplasm</keyword>
<keyword id="KW-0275">Fatty acid biosynthesis</keyword>
<keyword id="KW-0276">Fatty acid metabolism</keyword>
<keyword id="KW-0444">Lipid biosynthesis</keyword>
<keyword id="KW-0443">Lipid metabolism</keyword>
<keyword id="KW-0511">Multifunctional enzyme</keyword>
<keyword id="KW-0808">Transferase</keyword>
<sequence length="330" mass="35385">MQNLGIAITGSGSAAPETSLHNEELSQLVETSDEWISTRTGIRQRRLALPTESLSSLAAAASRQAIASAGITASDIDLILLATSTPDDLFGTATKIQAELGATKAVAFDLTAACSGFVFGLVTAAQFIRTGVYQNVLLIGADILSRWVDWQDRRTCVLFGDGAGAIVLQSNQSDRLLGFALKSDGTQNHYLNLAYQGTAQEILPNIKITQGTYQPVTMNGKEVYRFAAQKVPEIIDKALFEANITVDQIDWLLLHQANQRILDTVAQRLNIPAHKVISNLANYGNTSAASIPLALDEAVREGKIKPNDIIATSGFGAGLTWGAAIFQWGR</sequence>
<comment type="function">
    <text evidence="1">Catalyzes the condensation reaction of fatty acid synthesis by the addition to an acyl acceptor of two carbons from malonyl-ACP. Catalyzes the first condensation reaction which initiates fatty acid synthesis and may therefore play a role in governing the total rate of fatty acid production. Possesses both acetoacetyl-ACP synthase and acetyl transacylase activities. Its substrate specificity determines the biosynthesis of branched-chain and/or straight-chain of fatty acids.</text>
</comment>
<comment type="catalytic activity">
    <reaction evidence="1">
        <text>malonyl-[ACP] + acetyl-CoA + H(+) = 3-oxobutanoyl-[ACP] + CO2 + CoA</text>
        <dbReference type="Rhea" id="RHEA:12080"/>
        <dbReference type="Rhea" id="RHEA-COMP:9623"/>
        <dbReference type="Rhea" id="RHEA-COMP:9625"/>
        <dbReference type="ChEBI" id="CHEBI:15378"/>
        <dbReference type="ChEBI" id="CHEBI:16526"/>
        <dbReference type="ChEBI" id="CHEBI:57287"/>
        <dbReference type="ChEBI" id="CHEBI:57288"/>
        <dbReference type="ChEBI" id="CHEBI:78449"/>
        <dbReference type="ChEBI" id="CHEBI:78450"/>
        <dbReference type="EC" id="2.3.1.180"/>
    </reaction>
</comment>
<comment type="pathway">
    <text evidence="1">Lipid metabolism; fatty acid biosynthesis.</text>
</comment>
<comment type="subunit">
    <text evidence="1">Homodimer.</text>
</comment>
<comment type="subcellular location">
    <subcellularLocation>
        <location evidence="1">Cytoplasm</location>
    </subcellularLocation>
</comment>
<comment type="domain">
    <text evidence="1">The last Arg residue of the ACP-binding site is essential for the weak association between ACP/AcpP and FabH.</text>
</comment>
<comment type="similarity">
    <text evidence="1">Belongs to the thiolase-like superfamily. FabH family.</text>
</comment>